<comment type="function">
    <molecule>High affinity copper uptake protein 1</molecule>
    <text evidence="1 2 5 8 10 11 12 13 14 18 21 24 25">Uniporter that mediates the transport of copper(1+) from the extracellular space to the cytoplasm, across the plasma membrane (PubMed:11734551, PubMed:16135512, PubMed:17525160, PubMed:19740744, PubMed:20451502, PubMed:20569931, PubMed:23658018) and delivers directly copper(1+) to specific chaperone such as ATOX1, via a copper(1+)- mediated transient interaction between the C-terminal domain and a copper(1+) chaperone, thus controlling intracellular copper(1+) levels (PubMed:11734551, PubMed:16135512, PubMed:17525160, PubMed:19740744, PubMed:20451502, PubMed:20569931, PubMed:23658018, PubMed:26745413). May function in copper(1+) import from the apical membrane thus may drive intestinal copper absorption (By similarity). The copper(1+) transport mechanism is sodium-independent, saturable and of high-affinity (PubMed:11734551). Also mediates the uptake of silver(1+) (PubMed:20569931). May function in the influx of the platinum-containing chemotherapeutic agents (PubMed:20451502, PubMed:20569931). The platinum-containing chemotherapeutic agents uptake is saturable (By similarity). In vitro, mediates the transport of cadmium(2+) into cells (PubMed:33294387). Also participates in the first step of copper(2+) acquisition by cells through a direct transfer of copper(2+) from copper(2+) carriers in blood, such as ALB to the N-terminal domain of SLC31A1, leading to copper(2+) reduction and probably followed by copper(1+) stabilization (PubMed:30489586). In addition, functions as a redox sensor to promote angiogenesis in endothelial cells, in a copper(1+) transport independent manner, by transmitting the VEGF-induced ROS signal through a sulfenylation at Cys-189 leadin g to a subsequent disulfide bond formation between SLC31A1 and KDR (PubMed:35027734). The SLC31A1-KDR complex is then co-internalized to early endosomes, driving a sustained VEGFR2 signaling (PubMed:35027734).</text>
</comment>
<comment type="function">
    <molecule>Truncated CTR1 form</molecule>
    <text evidence="1">Mobilizes copper(1+) out of the endosomal compartment, making copper(1+) available for export out of the cells.</text>
</comment>
<comment type="catalytic activity">
    <reaction evidence="13">
        <text>Ag(+)(out) = Ag(+)(in)</text>
        <dbReference type="Rhea" id="RHEA:75207"/>
        <dbReference type="ChEBI" id="CHEBI:49468"/>
    </reaction>
</comment>
<comment type="catalytic activity">
    <reaction evidence="5 8 10 11 12 13 14">
        <text>Cu(+)(out) = Cu(+)(in)</text>
        <dbReference type="Rhea" id="RHEA:75211"/>
        <dbReference type="ChEBI" id="CHEBI:49552"/>
    </reaction>
</comment>
<comment type="activity regulation">
    <text evidence="5 11">Copper(1+) transport is stimulated by extracellular acidic pH and high potassium ions concentrations (PubMed:11734551). Copper(1+) import is regulated by a copper(1+)-dependent recycling of SLC31A1 (PubMed:19740744).</text>
</comment>
<comment type="biophysicochemical properties">
    <kinetics>
        <KM evidence="5">1.71 uM for copper(1+)</KM>
        <KM evidence="8">8.9 uM for copper(1+)</KM>
        <KM evidence="8">9.2 uM for copper(1+) (in Sf9 cells expressing SLC31A1)</KM>
        <KM evidence="14">4.4 uM for copper(1+)</KM>
        <Vmax evidence="5">6.76 pmol/min/mg protein toward copper(1+)</Vmax>
        <Vmax evidence="8">75.7 pmol/min/mg protein toward copper(1+)</Vmax>
        <Vmax evidence="8">59.5 pmol/min/mg protein toward copper(1+) (in Sf9 cells expressing SLC31A1)</Vmax>
    </kinetics>
</comment>
<comment type="subunit">
    <text evidence="5 7 9 16 17 18 22 23 25">Homotrimer (PubMed:11734551, PubMed:15326162, PubMed:16501047); is stabilized by cisplatin (PubMed:15326162) via interactions between cisplatin and the methionine-rich clusters(PubMed:15326162), and could be crucial for the copper(2+) reduction process and copper(1+) stabilization (PubMed:11734551, PubMed:15326162, PubMed:16501047, PubMed:32914794). Heterotrimer between SLC31A1, CCS and SOD1; this heterotrimer is copper(1+)-mediated and its maintenance is regulated through SOD1 activation (PubMed:31292775). Interacts with KDR; this interaction is induced upon VEGFA stimulation leading to SLC31A1 and KDR subsequent co-internalization to early endosomes, thereby activating KDR downstream signaling in endothelial cells (PubMed:35027734). Interacts (via C-terminal domain) with ATOX1 (via dimer form); this interaction improves ATOX1 stability and controls intracellular copper(1+) levels (PubMed:24837030, PubMed:26745413). Interacts with SLC31A2; this interaction stabilizes SLC31A2 and protects its from ubiquitination and degradation (PubMed:26205368). Interacts (via C-terminal domain) with CCS; this interaction is copper(1+)-mediated (PubMed:31292775).</text>
</comment>
<comment type="interaction">
    <interactant intactId="EBI-15571835">
        <id>O15431</id>
    </interactant>
    <interactant intactId="EBI-15571835">
        <id>O15431</id>
        <label>SLC31A1</label>
    </interactant>
    <organismsDiffer>false</organismsDiffer>
    <experiments>6</experiments>
</comment>
<comment type="subcellular location">
    <subcellularLocation>
        <location evidence="5 6 7 10 12 17 19 27">Cell membrane</location>
        <topology evidence="3">Multi-pass membrane protein</topology>
    </subcellularLocation>
    <subcellularLocation>
        <location evidence="19">Early endosome membrane</location>
        <topology evidence="3">Multi-pass membrane protein</topology>
    </subcellularLocation>
    <subcellularLocation>
        <location evidence="19">Recycling endosome membrane</location>
        <topology evidence="3">Multi-pass membrane protein</topology>
    </subcellularLocation>
    <subcellularLocation>
        <location evidence="1">Apical cell membrane</location>
        <topology evidence="3">Multi-pass membrane protein</topology>
    </subcellularLocation>
    <subcellularLocation>
        <location evidence="1">Late endosome membrane</location>
        <topology evidence="3">Multi-pass membrane protein</topology>
    </subcellularLocation>
    <subcellularLocation>
        <location evidence="1">Basolateral cell membrane</location>
        <topology evidence="3">Multi-pass membrane protein</topology>
    </subcellularLocation>
    <text evidence="1 2 7 11 14 17 19">The localization is controlled by the intra and extra-cellular copper concentration (PubMed:15326162, PubMed:19740744, PubMed:23658018, PubMed:26205368, PubMed:26945057). Under conditions of elevated extracellular copper concentrations, it is rapidly internalized by endocytosis from the plasma membrane by a clathrin- and dynamin-mediated process and degradated in order to prevent intracellular copper accumulation and to reduce the transport of the copper across the membrane (PubMed:15326162, PubMed:19740744, PubMed:23658018, PubMed:26205368, PubMed:26945057). The internalized SLC31A1 is then localized in early endosomes, and, upon a low extracellular copper concentrations, it is transported back to the plasma membrane in a RAB11A-dependent recycling pathway (PubMed:26945057). Localizes to the apical membrane in intestinal epithelial cells (By similarity). Mainly localized on the basolateral side of renal tubular cells (By similarity). Localizes to the neuronal cell body plasma membranes (By similarity).</text>
</comment>
<comment type="domain">
    <text evidence="14 16 18 21 23 26 29">The C-terminal domain mediates copper(1+) binding (PubMed:26745413) and is involved in the copper(1+)-dependent-ATOX1 interaction (PubMed:24837030, PubMed:26745413). The C-terminal domain appears to act to limit transport through the pore by regulating the rate of exit of copper ions at the intracellular side (PubMed:23658018). The N-terminal domain can collect copper(2+) from copper(2+) carriers in blood (PubMed:30489586). The N-terminal domain, in the trimeric arrangement, tunes its reactivity with copper, promoting copper(2+) reduction and copper(1+) stabilization thanks to the presence of histidine (His) and methionine (Met) motifs (PubMed:32914794, Ref.24). The bis-His motif directly coordinate to copper(2+), whereas the Mets motif is involved in copper(1+) binding (Ref.24). The ligand switching between the bis-His motif and the Mets motif is regulated by pH (PubMed:35601835).</text>
</comment>
<comment type="PTM">
    <text evidence="10">O-Glycosylation at Thr-27 protects from proteolytic cleavage in the N-terminal extracellular domain.</text>
</comment>
<comment type="PTM">
    <text evidence="15 20">Proteolytic cleavage, leading to a truncated form, is facilitated by SLC31A2 (PubMed:24167251) and initiated preferentially by CTSL and to a minor extend by CTSB in endolysosomal compartments (PubMed:24167251, PubMed:27143361). In vitro, is cleaved by CTSL/cathepsin L between residues 8 and 9 from the amino terminus (PubMed:27143361). A post-CTSL/cathepsin L processing occurs to yield to the fully truncated form (PubMed:27143361).</text>
</comment>
<comment type="PTM">
    <text evidence="25">Sulfenylated at Cys-189 after stimulation with VEGFA, which induces SLC31A1-KDR disulfide bond formation and their co-internalization to early endosomes, driving to a sustained VEGFR2 signaling.</text>
</comment>
<comment type="disease" evidence="27 28">
    <disease id="DI-06639">
        <name>Neurodegeneration and seizures due to copper transport defect</name>
        <acronym>NSCT</acronym>
        <description>An autosomal recessive disorder of copper metabolism characterized by global developmental delay, seizures, cortical and cerebellar atrophy, and axial hypotonia. Death in infancy may occur.</description>
        <dbReference type="MIM" id="620306"/>
    </disease>
    <text>The disease may be caused by variants affecting the gene represented in this entry.</text>
</comment>
<comment type="similarity">
    <text evidence="32">Belongs to the copper transporter (Ctr) (TC 1.A.56) family. SLC31A subfamily.</text>
</comment>
<keyword id="KW-0002">3D-structure</keyword>
<keyword id="KW-1003">Cell membrane</keyword>
<keyword id="KW-0186">Copper</keyword>
<keyword id="KW-0187">Copper transport</keyword>
<keyword id="KW-1015">Disulfide bond</keyword>
<keyword id="KW-0967">Endosome</keyword>
<keyword id="KW-0887">Epilepsy</keyword>
<keyword id="KW-0325">Glycoprotein</keyword>
<keyword id="KW-0406">Ion transport</keyword>
<keyword id="KW-0472">Membrane</keyword>
<keyword id="KW-0523">Neurodegeneration</keyword>
<keyword id="KW-0558">Oxidation</keyword>
<keyword id="KW-0597">Phosphoprotein</keyword>
<keyword id="KW-1267">Proteomics identification</keyword>
<keyword id="KW-1185">Reference proteome</keyword>
<keyword id="KW-0812">Transmembrane</keyword>
<keyword id="KW-1133">Transmembrane helix</keyword>
<keyword id="KW-0813">Transport</keyword>
<protein>
    <recommendedName>
        <fullName evidence="32">High affinity copper uptake protein 1</fullName>
    </recommendedName>
    <alternativeName>
        <fullName evidence="31">Copper transporter 1</fullName>
        <shortName evidence="31">hCTR1</shortName>
    </alternativeName>
    <alternativeName>
        <fullName>Solute carrier family 31 member 1</fullName>
    </alternativeName>
    <component>
        <recommendedName>
            <fullName evidence="30">Truncated CTR1 form</fullName>
        </recommendedName>
    </component>
</protein>
<evidence type="ECO:0000250" key="1">
    <source>
        <dbReference type="UniProtKB" id="Q8K211"/>
    </source>
</evidence>
<evidence type="ECO:0000250" key="2">
    <source>
        <dbReference type="UniProtKB" id="Q9JK41"/>
    </source>
</evidence>
<evidence type="ECO:0000255" key="3"/>
<evidence type="ECO:0000256" key="4">
    <source>
        <dbReference type="SAM" id="MobiDB-lite"/>
    </source>
</evidence>
<evidence type="ECO:0000269" key="5">
    <source>
    </source>
</evidence>
<evidence type="ECO:0000269" key="6">
    <source>
    </source>
</evidence>
<evidence type="ECO:0000269" key="7">
    <source>
    </source>
</evidence>
<evidence type="ECO:0000269" key="8">
    <source>
    </source>
</evidence>
<evidence type="ECO:0000269" key="9">
    <source>
    </source>
</evidence>
<evidence type="ECO:0000269" key="10">
    <source>
    </source>
</evidence>
<evidence type="ECO:0000269" key="11">
    <source>
    </source>
</evidence>
<evidence type="ECO:0000269" key="12">
    <source>
    </source>
</evidence>
<evidence type="ECO:0000269" key="13">
    <source>
    </source>
</evidence>
<evidence type="ECO:0000269" key="14">
    <source>
    </source>
</evidence>
<evidence type="ECO:0000269" key="15">
    <source>
    </source>
</evidence>
<evidence type="ECO:0000269" key="16">
    <source>
    </source>
</evidence>
<evidence type="ECO:0000269" key="17">
    <source>
    </source>
</evidence>
<evidence type="ECO:0000269" key="18">
    <source>
    </source>
</evidence>
<evidence type="ECO:0000269" key="19">
    <source>
    </source>
</evidence>
<evidence type="ECO:0000269" key="20">
    <source>
    </source>
</evidence>
<evidence type="ECO:0000269" key="21">
    <source>
    </source>
</evidence>
<evidence type="ECO:0000269" key="22">
    <source>
    </source>
</evidence>
<evidence type="ECO:0000269" key="23">
    <source>
    </source>
</evidence>
<evidence type="ECO:0000269" key="24">
    <source>
    </source>
</evidence>
<evidence type="ECO:0000269" key="25">
    <source>
    </source>
</evidence>
<evidence type="ECO:0000269" key="26">
    <source>
    </source>
</evidence>
<evidence type="ECO:0000269" key="27">
    <source>
    </source>
</evidence>
<evidence type="ECO:0000269" key="28">
    <source>
    </source>
</evidence>
<evidence type="ECO:0000269" key="29">
    <source ref="24"/>
</evidence>
<evidence type="ECO:0000303" key="30">
    <source>
    </source>
</evidence>
<evidence type="ECO:0000303" key="31">
    <source>
    </source>
</evidence>
<evidence type="ECO:0000305" key="32"/>
<evidence type="ECO:0000312" key="33">
    <source>
        <dbReference type="HGNC" id="HGNC:11016"/>
    </source>
</evidence>
<evidence type="ECO:0007744" key="34">
    <source>
        <dbReference type="PDB" id="2LS2"/>
    </source>
</evidence>
<evidence type="ECO:0007744" key="35">
    <source>
        <dbReference type="PDB" id="2LS3"/>
    </source>
</evidence>
<evidence type="ECO:0007744" key="36">
    <source>
        <dbReference type="PDB" id="2LS4"/>
    </source>
</evidence>
<evidence type="ECO:0007744" key="37">
    <source>
    </source>
</evidence>
<evidence type="ECO:0007829" key="38">
    <source>
        <dbReference type="PDB" id="2LS2"/>
    </source>
</evidence>
<evidence type="ECO:0007829" key="39">
    <source>
        <dbReference type="PDB" id="2LS3"/>
    </source>
</evidence>
<evidence type="ECO:0007829" key="40">
    <source>
        <dbReference type="PDB" id="2LS4"/>
    </source>
</evidence>
<feature type="chain" id="PRO_0000195040" description="High affinity copper uptake protein 1">
    <location>
        <begin position="1"/>
        <end position="190"/>
    </location>
</feature>
<feature type="chain" id="PRO_0000458008" description="Truncated CTR1 form" evidence="15">
    <location>
        <begin position="43"/>
        <end position="190"/>
    </location>
</feature>
<feature type="topological domain" description="Extracellular" evidence="3">
    <location>
        <begin position="1"/>
        <end position="61"/>
    </location>
</feature>
<feature type="transmembrane region" description="Helical" evidence="3">
    <location>
        <begin position="62"/>
        <end position="82"/>
    </location>
</feature>
<feature type="topological domain" description="Cytoplasmic" evidence="3">
    <location>
        <begin position="83"/>
        <end position="132"/>
    </location>
</feature>
<feature type="transmembrane region" description="Helical" evidence="3">
    <location>
        <begin position="133"/>
        <end position="153"/>
    </location>
</feature>
<feature type="topological domain" description="Extracellular" evidence="3">
    <location>
        <begin position="154"/>
        <end position="156"/>
    </location>
</feature>
<feature type="transmembrane region" description="Helical" evidence="3">
    <location>
        <begin position="157"/>
        <end position="177"/>
    </location>
</feature>
<feature type="topological domain" description="Cytoplasmic" evidence="3">
    <location>
        <begin position="178"/>
        <end position="190"/>
    </location>
</feature>
<feature type="region of interest" description="Disordered" evidence="4">
    <location>
        <begin position="1"/>
        <end position="35"/>
    </location>
</feature>
<feature type="short sequence motif" description="Bis-His motif" evidence="29">
    <location>
        <begin position="5"/>
        <end position="6"/>
    </location>
</feature>
<feature type="short sequence motif" description="Methionine segments (Mets) motif" evidence="29">
    <location>
        <begin position="7"/>
        <end position="12"/>
    </location>
</feature>
<feature type="compositionally biased region" description="Low complexity" evidence="4">
    <location>
        <begin position="26"/>
        <end position="35"/>
    </location>
</feature>
<feature type="site" description="Cleavage" evidence="15">
    <location>
        <begin position="42"/>
        <end position="43"/>
    </location>
</feature>
<feature type="modified residue" description="Phosphothreonine" evidence="37">
    <location>
        <position position="114"/>
    </location>
</feature>
<feature type="modified residue" description="Cysteine sulfenic acid (-SOH)" evidence="25">
    <location>
        <position position="189"/>
    </location>
</feature>
<feature type="glycosylation site" description="N-linked (GlcNAc...) asparagine" evidence="10">
    <location>
        <position position="15"/>
    </location>
</feature>
<feature type="glycosylation site" description="O-linked (GalNAc...) threonine" evidence="10">
    <location>
        <position position="27"/>
    </location>
</feature>
<feature type="disulfide bond" description="Interchain (with C-1208 in KDR)" evidence="25">
    <location>
        <position position="189"/>
    </location>
</feature>
<feature type="sequence variant" id="VAR_029338" description="In dbSNP:rs2233915.">
    <original>P</original>
    <variation>A</variation>
    <location>
        <position position="25"/>
    </location>
</feature>
<feature type="sequence variant" id="VAR_088353" description="In NSCT; uncertain significance." evidence="28">
    <original>L</original>
    <variation>P</variation>
    <location>
        <position position="79"/>
    </location>
</feature>
<feature type="sequence variant" id="VAR_088354" description="In NSCT; uncertain significance; does not affect localization at the plasma membrane." evidence="27">
    <original>R</original>
    <variation>H</variation>
    <location>
        <position position="95"/>
    </location>
</feature>
<feature type="mutagenesis site" description="Decreases affinity towards copper(1+)." evidence="29">
    <original>H</original>
    <variation>A</variation>
    <location>
        <position position="3"/>
    </location>
</feature>
<feature type="mutagenesis site" description="Affects copper(2+) binding. Increases the efficiency of the reduction." evidence="29">
    <original>H</original>
    <variation>A</variation>
    <location>
        <position position="5"/>
    </location>
</feature>
<feature type="mutagenesis site" description="Increases the efficiency of the reduction." evidence="29">
    <original>H</original>
    <variation>A</variation>
    <location>
        <position position="6"/>
    </location>
</feature>
<feature type="mutagenesis site" description="Affects homotrimer formation; when associated with 40-A--A-45. Does not affect localization at the plasma membrane; when associated with 40-A--A-45." evidence="7">
    <original>MGMSYM</original>
    <variation>AGASYA</variation>
    <location>
        <begin position="7"/>
        <end position="12"/>
    </location>
</feature>
<feature type="mutagenesis site" description="Affects homotrimer formation; when associated with 7-A--A-12. Does not affect localization at the plasma membrane; when associated with 7-A--A-12." evidence="7">
    <original>MMMMPM</original>
    <variation>AAAAPA</variation>
    <location>
        <begin position="40"/>
        <end position="45"/>
    </location>
</feature>
<feature type="mutagenesis site" description="Decreases of about 40% the copper(1+) transport activity." evidence="8">
    <original>H</original>
    <variation>A</variation>
    <location>
        <position position="139"/>
    </location>
</feature>
<feature type="mutagenesis site" description="Dramatically decreases copper(1+) affinity. Reduces copper(1+) uptake; when associated with L-150 and L-154. Does not affect cell membrane expression." evidence="8 14">
    <original>H</original>
    <variation>R</variation>
    <location>
        <position position="139"/>
    </location>
</feature>
<feature type="mutagenesis site" description="Reduces of about 30% the copper(1+) transport activity; when associated with I-154. Does not affect copper(1+) affinity; when associated with I-154. Abolishes silver(1+) transport activity; when associated with I-154." evidence="8 13">
    <original>M</original>
    <variation>I</variation>
    <location>
        <position position="150"/>
    </location>
</feature>
<feature type="mutagenesis site" description="Reduces copper(1+) uptake; when associated with L-154. Reduces copper(1+) uptake; when associated with L-154 and R-139. Reduces copper(1+) uptake; when associated with L-154 and 188-A--A-190." evidence="14">
    <original>M</original>
    <variation>L</variation>
    <location>
        <position position="150"/>
    </location>
</feature>
<feature type="mutagenesis site" description="Inhibits copper(1+)-induced MAPK activation. Loss of copper(1+)-induced endothelil cell (EC) migration and capillary formation." evidence="25">
    <original>M</original>
    <variation>A</variation>
    <location>
        <position position="154"/>
    </location>
</feature>
<feature type="mutagenesis site" description="Reduces of about 30% the copper(1+) transport activity; when associated with I-150. Does not affect copper(1+) affinity; when associated with I-150. Abolishes silver(1+) transport activity when associated with I-150." evidence="8 13">
    <original>M</original>
    <variation>I</variation>
    <location>
        <position position="154"/>
    </location>
</feature>
<feature type="mutagenesis site" description="Reduces copper(1+) uptake; when associated with L-150. Reduces copper(1+) uptake; when associated with L-150 and R-139. Reduces copper(1+) uptake; when associated with L-150 and 188-A--A-190." evidence="14">
    <original>M</original>
    <variation>L</variation>
    <location>
        <position position="154"/>
    </location>
</feature>
<feature type="mutagenesis site" description="Dramatically affects copper(1+) transport activity." evidence="8">
    <original>Y</original>
    <variation>A</variation>
    <location>
        <position position="156"/>
    </location>
</feature>
<feature type="mutagenesis site" description="Markedly decreases the copper(1+) transport activity; when associated with S-189." evidence="8">
    <original>C</original>
    <variation>S</variation>
    <location>
        <position position="161"/>
    </location>
</feature>
<feature type="mutagenesis site" description="Does not affect expression. Does not affect cell membrane localization. Significantly reduces copper(1+) transport activity." evidence="8">
    <location>
        <begin position="179"/>
        <end position="190"/>
    </location>
</feature>
<feature type="mutagenesis site" description="Increases copper(1+) uptake. Reduces affinity for copper(1+)." evidence="14">
    <location>
        <begin position="180"/>
        <end position="190"/>
    </location>
</feature>
<feature type="mutagenesis site" description="Increases copper(1+) uptake." evidence="14">
    <location>
        <begin position="184"/>
        <end position="190"/>
    </location>
</feature>
<feature type="mutagenesis site" description="Does not affect expression. Does not affect cell membrane localization. Moderately affects copper(1+) transport activity." evidence="8">
    <location>
        <begin position="185"/>
        <end position="190"/>
    </location>
</feature>
<feature type="mutagenesis site" description="Increases copper(1+) uptake. Reduces affinity for copper(1+). Reduces copper(1+) uptake; when associated with L-150 and L-154. Impairs endocytosis in response to higher extracellular copper(1+) concentration." evidence="14 18">
    <original>HCH</original>
    <variation>AAA</variation>
    <location>
        <begin position="188"/>
        <end position="190"/>
    </location>
</feature>
<feature type="mutagenesis site" description="Decreases of 45-fold copper(1+) affinity." evidence="18">
    <original>HCH</original>
    <variation>ACA</variation>
    <location>
        <begin position="188"/>
        <end position="190"/>
    </location>
</feature>
<feature type="mutagenesis site" description="Does not affect copper(1+)-induced MAPK activation. Does not affect copper(1+)-induced endothelial cells migration and capillary formation. Almost completely loss of VEGFA-induced internalization of KDR and SLC31A1. Almost completely loss of VEGFA-induced interaction between KDR and SLC31A1. Decreases of 200-fold affinity for copper(1+) ion. Loss of ATOX1 interaction in the absence of copper(1+)." evidence="18 25">
    <original>C</original>
    <variation>A</variation>
    <location>
        <position position="189"/>
    </location>
</feature>
<feature type="mutagenesis site" description="Markedly decreases the copper(1+) transport activity; when associated with S-161." evidence="8">
    <original>C</original>
    <variation>S</variation>
    <location>
        <position position="189"/>
    </location>
</feature>
<feature type="sequence conflict" description="In Ref. 3; BAD96586." evidence="32" ref="3">
    <original>A</original>
    <variation>G</variation>
    <location>
        <position position="168"/>
    </location>
</feature>
<feature type="helix" evidence="38">
    <location>
        <begin position="67"/>
        <end position="82"/>
    </location>
</feature>
<feature type="turn" evidence="38">
    <location>
        <begin position="83"/>
        <end position="85"/>
    </location>
</feature>
<feature type="helix" evidence="39">
    <location>
        <begin position="134"/>
        <end position="155"/>
    </location>
</feature>
<feature type="strand" evidence="40">
    <location>
        <begin position="160"/>
        <end position="162"/>
    </location>
</feature>
<feature type="helix" evidence="40">
    <location>
        <begin position="163"/>
        <end position="168"/>
    </location>
</feature>
<feature type="helix" evidence="40">
    <location>
        <begin position="174"/>
        <end position="177"/>
    </location>
</feature>
<name>COPT1_HUMAN</name>
<gene>
    <name evidence="33" type="primary">SLC31A1</name>
    <name type="synonym">COPT1</name>
    <name evidence="31" type="synonym">CTR1</name>
</gene>
<dbReference type="EMBL" id="U83460">
    <property type="protein sequence ID" value="AAB66306.1"/>
    <property type="molecule type" value="mRNA"/>
</dbReference>
<dbReference type="EMBL" id="AK222866">
    <property type="protein sequence ID" value="BAD96586.1"/>
    <property type="molecule type" value="mRNA"/>
</dbReference>
<dbReference type="EMBL" id="AK292511">
    <property type="protein sequence ID" value="BAF85200.1"/>
    <property type="molecule type" value="mRNA"/>
</dbReference>
<dbReference type="EMBL" id="AL831843">
    <property type="protein sequence ID" value="CAD38549.1"/>
    <property type="molecule type" value="mRNA"/>
</dbReference>
<dbReference type="EMBL" id="AL449305">
    <property type="status" value="NOT_ANNOTATED_CDS"/>
    <property type="molecule type" value="Genomic_DNA"/>
</dbReference>
<dbReference type="EMBL" id="CH471090">
    <property type="protein sequence ID" value="EAW87357.1"/>
    <property type="molecule type" value="Genomic_DNA"/>
</dbReference>
<dbReference type="EMBL" id="BC013611">
    <property type="protein sequence ID" value="AAH13611.1"/>
    <property type="molecule type" value="mRNA"/>
</dbReference>
<dbReference type="CCDS" id="CCDS6789.1"/>
<dbReference type="RefSeq" id="NP_001850.1">
    <property type="nucleotide sequence ID" value="NM_001859.4"/>
</dbReference>
<dbReference type="PDB" id="2LS2">
    <property type="method" value="NMR"/>
    <property type="chains" value="A=64-87"/>
</dbReference>
<dbReference type="PDB" id="2LS3">
    <property type="method" value="NMR"/>
    <property type="chains" value="A=132-157"/>
</dbReference>
<dbReference type="PDB" id="2LS4">
    <property type="method" value="NMR"/>
    <property type="chains" value="A=156-179"/>
</dbReference>
<dbReference type="PDBsum" id="2LS2"/>
<dbReference type="PDBsum" id="2LS3"/>
<dbReference type="PDBsum" id="2LS4"/>
<dbReference type="BMRB" id="O15431"/>
<dbReference type="EMDB" id="EMD-1593"/>
<dbReference type="SMR" id="O15431"/>
<dbReference type="BioGRID" id="107712">
    <property type="interactions" value="197"/>
</dbReference>
<dbReference type="DIP" id="DIP-48727N"/>
<dbReference type="FunCoup" id="O15431">
    <property type="interactions" value="762"/>
</dbReference>
<dbReference type="IntAct" id="O15431">
    <property type="interactions" value="172"/>
</dbReference>
<dbReference type="STRING" id="9606.ENSP00000363329"/>
<dbReference type="DrugBank" id="DB00958">
    <property type="generic name" value="Carboplatin"/>
</dbReference>
<dbReference type="DrugBank" id="DB00515">
    <property type="generic name" value="Cisplatin"/>
</dbReference>
<dbReference type="DrugBank" id="DB09130">
    <property type="generic name" value="Copper"/>
</dbReference>
<dbReference type="DrugBank" id="DB00526">
    <property type="generic name" value="Oxaliplatin"/>
</dbReference>
<dbReference type="TCDB" id="1.A.56.1.2">
    <property type="family name" value="the copper transporter (ctr) family"/>
</dbReference>
<dbReference type="GlyCosmos" id="O15431">
    <property type="glycosylation" value="2 sites, No reported glycans"/>
</dbReference>
<dbReference type="GlyGen" id="O15431">
    <property type="glycosylation" value="4 sites"/>
</dbReference>
<dbReference type="iPTMnet" id="O15431"/>
<dbReference type="PhosphoSitePlus" id="O15431"/>
<dbReference type="BioMuta" id="SLC31A1"/>
<dbReference type="jPOST" id="O15431"/>
<dbReference type="MassIVE" id="O15431"/>
<dbReference type="PaxDb" id="9606-ENSP00000363329"/>
<dbReference type="PeptideAtlas" id="O15431"/>
<dbReference type="ProteomicsDB" id="48657"/>
<dbReference type="Pumba" id="O15431"/>
<dbReference type="Antibodypedia" id="3008">
    <property type="antibodies" value="277 antibodies from 32 providers"/>
</dbReference>
<dbReference type="CPTC" id="O15431">
    <property type="antibodies" value="1 antibody"/>
</dbReference>
<dbReference type="DNASU" id="1317"/>
<dbReference type="Ensembl" id="ENST00000374212.5">
    <property type="protein sequence ID" value="ENSP00000363329.4"/>
    <property type="gene ID" value="ENSG00000136868.11"/>
</dbReference>
<dbReference type="GeneID" id="1317"/>
<dbReference type="KEGG" id="hsa:1317"/>
<dbReference type="MANE-Select" id="ENST00000374212.5">
    <property type="protein sequence ID" value="ENSP00000363329.4"/>
    <property type="RefSeq nucleotide sequence ID" value="NM_001859.4"/>
    <property type="RefSeq protein sequence ID" value="NP_001850.1"/>
</dbReference>
<dbReference type="UCSC" id="uc004bgu.4">
    <property type="organism name" value="human"/>
</dbReference>
<dbReference type="AGR" id="HGNC:11016"/>
<dbReference type="CTD" id="1317"/>
<dbReference type="DisGeNET" id="1317"/>
<dbReference type="GeneCards" id="SLC31A1"/>
<dbReference type="HGNC" id="HGNC:11016">
    <property type="gene designation" value="SLC31A1"/>
</dbReference>
<dbReference type="HPA" id="ENSG00000136868">
    <property type="expression patterns" value="Tissue enhanced (liver)"/>
</dbReference>
<dbReference type="MalaCards" id="SLC31A1"/>
<dbReference type="MIM" id="603085">
    <property type="type" value="gene"/>
</dbReference>
<dbReference type="MIM" id="620306">
    <property type="type" value="phenotype"/>
</dbReference>
<dbReference type="neXtProt" id="NX_O15431"/>
<dbReference type="OpenTargets" id="ENSG00000136868"/>
<dbReference type="PharmGKB" id="PA118"/>
<dbReference type="VEuPathDB" id="HostDB:ENSG00000136868"/>
<dbReference type="eggNOG" id="KOG3386">
    <property type="taxonomic scope" value="Eukaryota"/>
</dbReference>
<dbReference type="GeneTree" id="ENSGT00940000155147"/>
<dbReference type="HOGENOM" id="CLU_079690_2_0_1"/>
<dbReference type="InParanoid" id="O15431"/>
<dbReference type="OMA" id="AKTVACH"/>
<dbReference type="OrthoDB" id="161814at2759"/>
<dbReference type="PAN-GO" id="O15431">
    <property type="GO annotations" value="3 GO annotations based on evolutionary models"/>
</dbReference>
<dbReference type="PhylomeDB" id="O15431"/>
<dbReference type="TreeFam" id="TF315142"/>
<dbReference type="BRENDA" id="7.2.2.8">
    <property type="organism ID" value="2681"/>
</dbReference>
<dbReference type="PathwayCommons" id="O15431"/>
<dbReference type="Reactome" id="R-HSA-425410">
    <property type="pathway name" value="Metal ion SLC transporters"/>
</dbReference>
<dbReference type="SignaLink" id="O15431"/>
<dbReference type="BioGRID-ORCS" id="1317">
    <property type="hits" value="91 hits in 1153 CRISPR screens"/>
</dbReference>
<dbReference type="ChiTaRS" id="SLC31A1">
    <property type="organism name" value="human"/>
</dbReference>
<dbReference type="EvolutionaryTrace" id="O15431"/>
<dbReference type="GeneWiki" id="SLC31A1"/>
<dbReference type="GenomeRNAi" id="1317"/>
<dbReference type="Pharos" id="O15431">
    <property type="development level" value="Tbio"/>
</dbReference>
<dbReference type="PRO" id="PR:O15431"/>
<dbReference type="Proteomes" id="UP000005640">
    <property type="component" value="Chromosome 9"/>
</dbReference>
<dbReference type="RNAct" id="O15431">
    <property type="molecule type" value="protein"/>
</dbReference>
<dbReference type="Bgee" id="ENSG00000136868">
    <property type="expression patterns" value="Expressed in parotid gland and 181 other cell types or tissues"/>
</dbReference>
<dbReference type="ExpressionAtlas" id="O15431">
    <property type="expression patterns" value="baseline and differential"/>
</dbReference>
<dbReference type="GO" id="GO:0016324">
    <property type="term" value="C:apical plasma membrane"/>
    <property type="evidence" value="ECO:0000250"/>
    <property type="project" value="UniProtKB"/>
</dbReference>
<dbReference type="GO" id="GO:0016323">
    <property type="term" value="C:basolateral plasma membrane"/>
    <property type="evidence" value="ECO:0000250"/>
    <property type="project" value="UniProtKB"/>
</dbReference>
<dbReference type="GO" id="GO:0031901">
    <property type="term" value="C:early endosome membrane"/>
    <property type="evidence" value="ECO:0000314"/>
    <property type="project" value="UniProtKB"/>
</dbReference>
<dbReference type="GO" id="GO:0014704">
    <property type="term" value="C:intercalated disc"/>
    <property type="evidence" value="ECO:0007669"/>
    <property type="project" value="Ensembl"/>
</dbReference>
<dbReference type="GO" id="GO:0031902">
    <property type="term" value="C:late endosome membrane"/>
    <property type="evidence" value="ECO:0007669"/>
    <property type="project" value="UniProtKB-SubCell"/>
</dbReference>
<dbReference type="GO" id="GO:0005886">
    <property type="term" value="C:plasma membrane"/>
    <property type="evidence" value="ECO:0000314"/>
    <property type="project" value="UniProtKB"/>
</dbReference>
<dbReference type="GO" id="GO:0055038">
    <property type="term" value="C:recycling endosome membrane"/>
    <property type="evidence" value="ECO:0000314"/>
    <property type="project" value="UniProtKB"/>
</dbReference>
<dbReference type="GO" id="GO:0005507">
    <property type="term" value="F:copper ion binding"/>
    <property type="evidence" value="ECO:0000314"/>
    <property type="project" value="UniProtKB"/>
</dbReference>
<dbReference type="GO" id="GO:0005375">
    <property type="term" value="F:copper ion transmembrane transporter activity"/>
    <property type="evidence" value="ECO:0000314"/>
    <property type="project" value="UniProtKB"/>
</dbReference>
<dbReference type="GO" id="GO:0042802">
    <property type="term" value="F:identical protein binding"/>
    <property type="evidence" value="ECO:0000353"/>
    <property type="project" value="IntAct"/>
</dbReference>
<dbReference type="GO" id="GO:0015080">
    <property type="term" value="F:silver ion transmembrane transporter activity"/>
    <property type="evidence" value="ECO:0000314"/>
    <property type="project" value="UniProtKB"/>
</dbReference>
<dbReference type="GO" id="GO:0042910">
    <property type="term" value="F:xenobiotic transmembrane transporter activity"/>
    <property type="evidence" value="ECO:0000250"/>
    <property type="project" value="UniProtKB"/>
</dbReference>
<dbReference type="GO" id="GO:0001525">
    <property type="term" value="P:angiogenesis"/>
    <property type="evidence" value="ECO:0000315"/>
    <property type="project" value="UniProtKB"/>
</dbReference>
<dbReference type="GO" id="GO:0015677">
    <property type="term" value="P:copper ion import"/>
    <property type="evidence" value="ECO:0000314"/>
    <property type="project" value="UniProtKB"/>
</dbReference>
<dbReference type="GO" id="GO:0006825">
    <property type="term" value="P:copper ion transport"/>
    <property type="evidence" value="ECO:0000304"/>
    <property type="project" value="ProtInc"/>
</dbReference>
<dbReference type="GO" id="GO:0051649">
    <property type="term" value="P:establishment of localization in cell"/>
    <property type="evidence" value="ECO:0007669"/>
    <property type="project" value="Ensembl"/>
</dbReference>
<dbReference type="GO" id="GO:0006878">
    <property type="term" value="P:intracellular copper ion homeostasis"/>
    <property type="evidence" value="ECO:0007669"/>
    <property type="project" value="Ensembl"/>
</dbReference>
<dbReference type="GO" id="GO:0015679">
    <property type="term" value="P:plasma membrane copper ion transport"/>
    <property type="evidence" value="ECO:0000314"/>
    <property type="project" value="UniProtKB"/>
</dbReference>
<dbReference type="GO" id="GO:0051259">
    <property type="term" value="P:protein complex oligomerization"/>
    <property type="evidence" value="ECO:0000314"/>
    <property type="project" value="UniProtKB"/>
</dbReference>
<dbReference type="GO" id="GO:1902601">
    <property type="term" value="P:silver ion transmembrane transport"/>
    <property type="evidence" value="ECO:0000314"/>
    <property type="project" value="UniProtKB"/>
</dbReference>
<dbReference type="GO" id="GO:0036324">
    <property type="term" value="P:vascular endothelial growth factor receptor-2 signaling pathway"/>
    <property type="evidence" value="ECO:0000315"/>
    <property type="project" value="UniProtKB"/>
</dbReference>
<dbReference type="GO" id="GO:0042908">
    <property type="term" value="P:xenobiotic transport"/>
    <property type="evidence" value="ECO:0000314"/>
    <property type="project" value="UniProtKB"/>
</dbReference>
<dbReference type="InterPro" id="IPR007274">
    <property type="entry name" value="Cop_transporter"/>
</dbReference>
<dbReference type="PANTHER" id="PTHR12483:SF22">
    <property type="entry name" value="HIGH AFFINITY COPPER UPTAKE PROTEIN 1"/>
    <property type="match status" value="1"/>
</dbReference>
<dbReference type="PANTHER" id="PTHR12483">
    <property type="entry name" value="SOLUTE CARRIER FAMILY 31 COPPER TRANSPORTERS"/>
    <property type="match status" value="1"/>
</dbReference>
<dbReference type="Pfam" id="PF04145">
    <property type="entry name" value="Ctr"/>
    <property type="match status" value="1"/>
</dbReference>
<sequence length="190" mass="21091">MDHSHHMGMSYMDSNSTMQPSHHHPTTSASHSHGGGDSSMMMMPMTFYFGFKNVELLFSGLVINTAGEMAGAFVAVFLLAMFYEGLKIARESLLRKSQVSIRYNSMPVPGPNGTILMETHKTVGQQMLSFPHLLQTVLHIIQVVISYFLMLIFMTYNGYLCIAVAAGAGTGYFLFSWKKAVVVDITEHCH</sequence>
<reference key="1">
    <citation type="journal article" date="1997" name="Proc. Natl. Acad. Sci. U.S.A.">
        <title>hCTR1: a human gene for copper uptake identified by complementation in yeast.</title>
        <authorList>
            <person name="Zhou B."/>
            <person name="Gitschier J."/>
        </authorList>
    </citation>
    <scope>NUCLEOTIDE SEQUENCE [MRNA]</scope>
</reference>
<reference key="2">
    <citation type="journal article" date="2004" name="Nat. Genet.">
        <title>Complete sequencing and characterization of 21,243 full-length human cDNAs.</title>
        <authorList>
            <person name="Ota T."/>
            <person name="Suzuki Y."/>
            <person name="Nishikawa T."/>
            <person name="Otsuki T."/>
            <person name="Sugiyama T."/>
            <person name="Irie R."/>
            <person name="Wakamatsu A."/>
            <person name="Hayashi K."/>
            <person name="Sato H."/>
            <person name="Nagai K."/>
            <person name="Kimura K."/>
            <person name="Makita H."/>
            <person name="Sekine M."/>
            <person name="Obayashi M."/>
            <person name="Nishi T."/>
            <person name="Shibahara T."/>
            <person name="Tanaka T."/>
            <person name="Ishii S."/>
            <person name="Yamamoto J."/>
            <person name="Saito K."/>
            <person name="Kawai Y."/>
            <person name="Isono Y."/>
            <person name="Nakamura Y."/>
            <person name="Nagahari K."/>
            <person name="Murakami K."/>
            <person name="Yasuda T."/>
            <person name="Iwayanagi T."/>
            <person name="Wagatsuma M."/>
            <person name="Shiratori A."/>
            <person name="Sudo H."/>
            <person name="Hosoiri T."/>
            <person name="Kaku Y."/>
            <person name="Kodaira H."/>
            <person name="Kondo H."/>
            <person name="Sugawara M."/>
            <person name="Takahashi M."/>
            <person name="Kanda K."/>
            <person name="Yokoi T."/>
            <person name="Furuya T."/>
            <person name="Kikkawa E."/>
            <person name="Omura Y."/>
            <person name="Abe K."/>
            <person name="Kamihara K."/>
            <person name="Katsuta N."/>
            <person name="Sato K."/>
            <person name="Tanikawa M."/>
            <person name="Yamazaki M."/>
            <person name="Ninomiya K."/>
            <person name="Ishibashi T."/>
            <person name="Yamashita H."/>
            <person name="Murakawa K."/>
            <person name="Fujimori K."/>
            <person name="Tanai H."/>
            <person name="Kimata M."/>
            <person name="Watanabe M."/>
            <person name="Hiraoka S."/>
            <person name="Chiba Y."/>
            <person name="Ishida S."/>
            <person name="Ono Y."/>
            <person name="Takiguchi S."/>
            <person name="Watanabe S."/>
            <person name="Yosida M."/>
            <person name="Hotuta T."/>
            <person name="Kusano J."/>
            <person name="Kanehori K."/>
            <person name="Takahashi-Fujii A."/>
            <person name="Hara H."/>
            <person name="Tanase T.-O."/>
            <person name="Nomura Y."/>
            <person name="Togiya S."/>
            <person name="Komai F."/>
            <person name="Hara R."/>
            <person name="Takeuchi K."/>
            <person name="Arita M."/>
            <person name="Imose N."/>
            <person name="Musashino K."/>
            <person name="Yuuki H."/>
            <person name="Oshima A."/>
            <person name="Sasaki N."/>
            <person name="Aotsuka S."/>
            <person name="Yoshikawa Y."/>
            <person name="Matsunawa H."/>
            <person name="Ichihara T."/>
            <person name="Shiohata N."/>
            <person name="Sano S."/>
            <person name="Moriya S."/>
            <person name="Momiyama H."/>
            <person name="Satoh N."/>
            <person name="Takami S."/>
            <person name="Terashima Y."/>
            <person name="Suzuki O."/>
            <person name="Nakagawa S."/>
            <person name="Senoh A."/>
            <person name="Mizoguchi H."/>
            <person name="Goto Y."/>
            <person name="Shimizu F."/>
            <person name="Wakebe H."/>
            <person name="Hishigaki H."/>
            <person name="Watanabe T."/>
            <person name="Sugiyama A."/>
            <person name="Takemoto M."/>
            <person name="Kawakami B."/>
            <person name="Yamazaki M."/>
            <person name="Watanabe K."/>
            <person name="Kumagai A."/>
            <person name="Itakura S."/>
            <person name="Fukuzumi Y."/>
            <person name="Fujimori Y."/>
            <person name="Komiyama M."/>
            <person name="Tashiro H."/>
            <person name="Tanigami A."/>
            <person name="Fujiwara T."/>
            <person name="Ono T."/>
            <person name="Yamada K."/>
            <person name="Fujii Y."/>
            <person name="Ozaki K."/>
            <person name="Hirao M."/>
            <person name="Ohmori Y."/>
            <person name="Kawabata A."/>
            <person name="Hikiji T."/>
            <person name="Kobatake N."/>
            <person name="Inagaki H."/>
            <person name="Ikema Y."/>
            <person name="Okamoto S."/>
            <person name="Okitani R."/>
            <person name="Kawakami T."/>
            <person name="Noguchi S."/>
            <person name="Itoh T."/>
            <person name="Shigeta K."/>
            <person name="Senba T."/>
            <person name="Matsumura K."/>
            <person name="Nakajima Y."/>
            <person name="Mizuno T."/>
            <person name="Morinaga M."/>
            <person name="Sasaki M."/>
            <person name="Togashi T."/>
            <person name="Oyama M."/>
            <person name="Hata H."/>
            <person name="Watanabe M."/>
            <person name="Komatsu T."/>
            <person name="Mizushima-Sugano J."/>
            <person name="Satoh T."/>
            <person name="Shirai Y."/>
            <person name="Takahashi Y."/>
            <person name="Nakagawa K."/>
            <person name="Okumura K."/>
            <person name="Nagase T."/>
            <person name="Nomura N."/>
            <person name="Kikuchi H."/>
            <person name="Masuho Y."/>
            <person name="Yamashita R."/>
            <person name="Nakai K."/>
            <person name="Yada T."/>
            <person name="Nakamura Y."/>
            <person name="Ohara O."/>
            <person name="Isogai T."/>
            <person name="Sugano S."/>
        </authorList>
    </citation>
    <scope>NUCLEOTIDE SEQUENCE [LARGE SCALE MRNA]</scope>
    <source>
        <tissue>Testis</tissue>
    </source>
</reference>
<reference key="3">
    <citation type="submission" date="2005-04" db="EMBL/GenBank/DDBJ databases">
        <authorList>
            <person name="Suzuki Y."/>
            <person name="Sugano S."/>
            <person name="Totoki Y."/>
            <person name="Toyoda A."/>
            <person name="Takeda T."/>
            <person name="Sakaki Y."/>
            <person name="Tanaka A."/>
            <person name="Yokoyama S."/>
        </authorList>
    </citation>
    <scope>NUCLEOTIDE SEQUENCE [LARGE SCALE MRNA]</scope>
    <source>
        <tissue>Liver</tissue>
    </source>
</reference>
<reference key="4">
    <citation type="journal article" date="2007" name="BMC Genomics">
        <title>The full-ORF clone resource of the German cDNA consortium.</title>
        <authorList>
            <person name="Bechtel S."/>
            <person name="Rosenfelder H."/>
            <person name="Duda A."/>
            <person name="Schmidt C.P."/>
            <person name="Ernst U."/>
            <person name="Wellenreuther R."/>
            <person name="Mehrle A."/>
            <person name="Schuster C."/>
            <person name="Bahr A."/>
            <person name="Bloecker H."/>
            <person name="Heubner D."/>
            <person name="Hoerlein A."/>
            <person name="Michel G."/>
            <person name="Wedler H."/>
            <person name="Koehrer K."/>
            <person name="Ottenwaelder B."/>
            <person name="Poustka A."/>
            <person name="Wiemann S."/>
            <person name="Schupp I."/>
        </authorList>
    </citation>
    <scope>NUCLEOTIDE SEQUENCE [LARGE SCALE MRNA]</scope>
    <source>
        <tissue>Skeletal muscle</tissue>
    </source>
</reference>
<reference key="5">
    <citation type="journal article" date="2004" name="Nature">
        <title>DNA sequence and analysis of human chromosome 9.</title>
        <authorList>
            <person name="Humphray S.J."/>
            <person name="Oliver K."/>
            <person name="Hunt A.R."/>
            <person name="Plumb R.W."/>
            <person name="Loveland J.E."/>
            <person name="Howe K.L."/>
            <person name="Andrews T.D."/>
            <person name="Searle S."/>
            <person name="Hunt S.E."/>
            <person name="Scott C.E."/>
            <person name="Jones M.C."/>
            <person name="Ainscough R."/>
            <person name="Almeida J.P."/>
            <person name="Ambrose K.D."/>
            <person name="Ashwell R.I.S."/>
            <person name="Babbage A.K."/>
            <person name="Babbage S."/>
            <person name="Bagguley C.L."/>
            <person name="Bailey J."/>
            <person name="Banerjee R."/>
            <person name="Barker D.J."/>
            <person name="Barlow K.F."/>
            <person name="Bates K."/>
            <person name="Beasley H."/>
            <person name="Beasley O."/>
            <person name="Bird C.P."/>
            <person name="Bray-Allen S."/>
            <person name="Brown A.J."/>
            <person name="Brown J.Y."/>
            <person name="Burford D."/>
            <person name="Burrill W."/>
            <person name="Burton J."/>
            <person name="Carder C."/>
            <person name="Carter N.P."/>
            <person name="Chapman J.C."/>
            <person name="Chen Y."/>
            <person name="Clarke G."/>
            <person name="Clark S.Y."/>
            <person name="Clee C.M."/>
            <person name="Clegg S."/>
            <person name="Collier R.E."/>
            <person name="Corby N."/>
            <person name="Crosier M."/>
            <person name="Cummings A.T."/>
            <person name="Davies J."/>
            <person name="Dhami P."/>
            <person name="Dunn M."/>
            <person name="Dutta I."/>
            <person name="Dyer L.W."/>
            <person name="Earthrowl M.E."/>
            <person name="Faulkner L."/>
            <person name="Fleming C.J."/>
            <person name="Frankish A."/>
            <person name="Frankland J.A."/>
            <person name="French L."/>
            <person name="Fricker D.G."/>
            <person name="Garner P."/>
            <person name="Garnett J."/>
            <person name="Ghori J."/>
            <person name="Gilbert J.G.R."/>
            <person name="Glison C."/>
            <person name="Grafham D.V."/>
            <person name="Gribble S."/>
            <person name="Griffiths C."/>
            <person name="Griffiths-Jones S."/>
            <person name="Grocock R."/>
            <person name="Guy J."/>
            <person name="Hall R.E."/>
            <person name="Hammond S."/>
            <person name="Harley J.L."/>
            <person name="Harrison E.S.I."/>
            <person name="Hart E.A."/>
            <person name="Heath P.D."/>
            <person name="Henderson C.D."/>
            <person name="Hopkins B.L."/>
            <person name="Howard P.J."/>
            <person name="Howden P.J."/>
            <person name="Huckle E."/>
            <person name="Johnson C."/>
            <person name="Johnson D."/>
            <person name="Joy A.A."/>
            <person name="Kay M."/>
            <person name="Keenan S."/>
            <person name="Kershaw J.K."/>
            <person name="Kimberley A.M."/>
            <person name="King A."/>
            <person name="Knights A."/>
            <person name="Laird G.K."/>
            <person name="Langford C."/>
            <person name="Lawlor S."/>
            <person name="Leongamornlert D.A."/>
            <person name="Leversha M."/>
            <person name="Lloyd C."/>
            <person name="Lloyd D.M."/>
            <person name="Lovell J."/>
            <person name="Martin S."/>
            <person name="Mashreghi-Mohammadi M."/>
            <person name="Matthews L."/>
            <person name="McLaren S."/>
            <person name="McLay K.E."/>
            <person name="McMurray A."/>
            <person name="Milne S."/>
            <person name="Nickerson T."/>
            <person name="Nisbett J."/>
            <person name="Nordsiek G."/>
            <person name="Pearce A.V."/>
            <person name="Peck A.I."/>
            <person name="Porter K.M."/>
            <person name="Pandian R."/>
            <person name="Pelan S."/>
            <person name="Phillimore B."/>
            <person name="Povey S."/>
            <person name="Ramsey Y."/>
            <person name="Rand V."/>
            <person name="Scharfe M."/>
            <person name="Sehra H.K."/>
            <person name="Shownkeen R."/>
            <person name="Sims S.K."/>
            <person name="Skuce C.D."/>
            <person name="Smith M."/>
            <person name="Steward C.A."/>
            <person name="Swarbreck D."/>
            <person name="Sycamore N."/>
            <person name="Tester J."/>
            <person name="Thorpe A."/>
            <person name="Tracey A."/>
            <person name="Tromans A."/>
            <person name="Thomas D.W."/>
            <person name="Wall M."/>
            <person name="Wallis J.M."/>
            <person name="West A.P."/>
            <person name="Whitehead S.L."/>
            <person name="Willey D.L."/>
            <person name="Williams S.A."/>
            <person name="Wilming L."/>
            <person name="Wray P.W."/>
            <person name="Young L."/>
            <person name="Ashurst J.L."/>
            <person name="Coulson A."/>
            <person name="Blocker H."/>
            <person name="Durbin R.M."/>
            <person name="Sulston J.E."/>
            <person name="Hubbard T."/>
            <person name="Jackson M.J."/>
            <person name="Bentley D.R."/>
            <person name="Beck S."/>
            <person name="Rogers J."/>
            <person name="Dunham I."/>
        </authorList>
    </citation>
    <scope>NUCLEOTIDE SEQUENCE [LARGE SCALE GENOMIC DNA]</scope>
</reference>
<reference key="6">
    <citation type="submission" date="2005-07" db="EMBL/GenBank/DDBJ databases">
        <authorList>
            <person name="Mural R.J."/>
            <person name="Istrail S."/>
            <person name="Sutton G.G."/>
            <person name="Florea L."/>
            <person name="Halpern A.L."/>
            <person name="Mobarry C.M."/>
            <person name="Lippert R."/>
            <person name="Walenz B."/>
            <person name="Shatkay H."/>
            <person name="Dew I."/>
            <person name="Miller J.R."/>
            <person name="Flanigan M.J."/>
            <person name="Edwards N.J."/>
            <person name="Bolanos R."/>
            <person name="Fasulo D."/>
            <person name="Halldorsson B.V."/>
            <person name="Hannenhalli S."/>
            <person name="Turner R."/>
            <person name="Yooseph S."/>
            <person name="Lu F."/>
            <person name="Nusskern D.R."/>
            <person name="Shue B.C."/>
            <person name="Zheng X.H."/>
            <person name="Zhong F."/>
            <person name="Delcher A.L."/>
            <person name="Huson D.H."/>
            <person name="Kravitz S.A."/>
            <person name="Mouchard L."/>
            <person name="Reinert K."/>
            <person name="Remington K.A."/>
            <person name="Clark A.G."/>
            <person name="Waterman M.S."/>
            <person name="Eichler E.E."/>
            <person name="Adams M.D."/>
            <person name="Hunkapiller M.W."/>
            <person name="Myers E.W."/>
            <person name="Venter J.C."/>
        </authorList>
    </citation>
    <scope>NUCLEOTIDE SEQUENCE [LARGE SCALE GENOMIC DNA]</scope>
</reference>
<reference key="7">
    <citation type="journal article" date="2004" name="Genome Res.">
        <title>The status, quality, and expansion of the NIH full-length cDNA project: the Mammalian Gene Collection (MGC).</title>
        <authorList>
            <consortium name="The MGC Project Team"/>
        </authorList>
    </citation>
    <scope>NUCLEOTIDE SEQUENCE [LARGE SCALE MRNA]</scope>
    <source>
        <tissue>Lung</tissue>
    </source>
</reference>
<reference key="8">
    <citation type="journal article" date="2002" name="Biochem. J.">
        <title>Biochemical characterization and subcellular localization of human copper transporter 1 (hCTR1).</title>
        <authorList>
            <person name="Klomp A.E."/>
            <person name="Tops B.B."/>
            <person name="Van Denberg I.E."/>
            <person name="Berger R."/>
            <person name="Klomp L.W."/>
        </authorList>
    </citation>
    <scope>SUBCELLULAR LOCATION</scope>
</reference>
<reference key="9">
    <citation type="journal article" date="2002" name="J. Biol. Chem.">
        <title>Biochemical characterization of the human copper transporter Ctr1.</title>
        <authorList>
            <person name="Lee J."/>
            <person name="Pena M.M."/>
            <person name="Nose Y."/>
            <person name="Thiele D.J."/>
        </authorList>
    </citation>
    <scope>FUNCTION</scope>
    <scope>TRANSPORTER ACTIVITY</scope>
    <scope>BIOPHYSICOCHEMICAL PROPERTIES</scope>
    <scope>SUBUNIT</scope>
    <scope>SUBCELLULAR LOCATION</scope>
</reference>
<reference key="10">
    <citation type="journal article" date="2004" name="J. Biol. Chem.">
        <title>Cisplatin stabilizes a multimeric complex of the human Ctr1 copper transporter: requirement for the extracellular methionine-rich clusters.</title>
        <authorList>
            <person name="Guo Y."/>
            <person name="Smith K."/>
            <person name="Petris M.J."/>
        </authorList>
    </citation>
    <scope>SUBCELLULAR LOCATION</scope>
    <scope>SUBUNIT</scope>
    <scope>MUTAGENESIS OF 7-MET--MET-12 AND 40-MET--MET-45</scope>
    <scope>MOTIF</scope>
</reference>
<reference key="11">
    <citation type="journal article" date="2005" name="J. Biol. Chem.">
        <title>The mechanism of copper uptake mediated by human CTR1: a mutational analysis.</title>
        <authorList>
            <person name="Eisses J.F."/>
            <person name="Kaplan J.H."/>
        </authorList>
    </citation>
    <scope>FUNCTION</scope>
    <scope>BIOPHYSICOCHEMICAL PROPERTIES</scope>
    <scope>TRANSPORTER ACTIVITY</scope>
    <scope>MUTAGENESIS OF HIS-139; MET-150; MET-154; TYR-156; CYS-161; 179-LYS--HIS-190; 185-ILE--HIS-190 AND CYS-189</scope>
</reference>
<reference key="12">
    <citation type="journal article" date="2007" name="J. Biol. Chem.">
        <title>O-linked glycosylation at threonine 27 protects the copper transporter hCTR1 from proteolytic cleavage in mammalian cells.</title>
        <authorList>
            <person name="Maryon E.B."/>
            <person name="Molloy S.A."/>
            <person name="Kaplan J.H."/>
        </authorList>
    </citation>
    <scope>FUNCTION</scope>
    <scope>TRANSPORTER ACTIVITY</scope>
    <scope>SUBCELLULAR LOCATION</scope>
    <scope>GLYCOSYLATION AT ASN-15 AND THR-27</scope>
</reference>
<reference key="13">
    <citation type="journal article" date="2009" name="J. Biol. Chem.">
        <title>Copper-dependent recycling of hCTR1, the human high affinity copper transporter.</title>
        <authorList>
            <person name="Molloy S.A."/>
            <person name="Kaplan J.H."/>
        </authorList>
    </citation>
    <scope>FUNCTION</scope>
    <scope>TRANSPORTER ACTIVITY</scope>
    <scope>SUBCELLULAR LOCATION</scope>
    <scope>ACTIVITY REGULATION</scope>
</reference>
<reference key="14">
    <citation type="journal article" date="2010" name="Biochem. Pharmacol.">
        <title>The role of the N-terminus of mammalian copper transporter 1 in the cellular accumulation of cisplatin.</title>
        <authorList>
            <person name="Larson C.A."/>
            <person name="Adams P.L."/>
            <person name="Jandial D.D."/>
            <person name="Blair B.G."/>
            <person name="Safaei R."/>
            <person name="Howell S.B."/>
        </authorList>
    </citation>
    <scope>FUNCTION</scope>
    <scope>TRANSPORTER ACTIVITY</scope>
    <scope>SUBCELLULAR LOCATION</scope>
</reference>
<reference key="15">
    <citation type="journal article" date="2010" name="J. Trace Elem. Med. Biol.">
        <title>Ctr1 transports silver into mammalian cells.</title>
        <authorList>
            <person name="Bertinato J."/>
            <person name="Cheung L."/>
            <person name="Hoque R."/>
            <person name="Plouffe L.J."/>
        </authorList>
    </citation>
    <scope>FUNCTION</scope>
    <scope>TRANSPORTER ACTIVITY</scope>
    <scope>MUTAGENESIS OF MET-150 AND MET-154</scope>
</reference>
<reference key="16">
    <citation type="journal article" date="2013" name="J. Biol. Chem.">
        <title>Rate and regulation of copper transport by human copper transporter 1 (hCTR1).</title>
        <authorList>
            <person name="Maryon E.B."/>
            <person name="Molloy S.A."/>
            <person name="Ivy K."/>
            <person name="Yu H."/>
            <person name="Kaplan J.H."/>
        </authorList>
    </citation>
    <scope>FUNCTION</scope>
    <scope>TRANSPORTER ACTIVITY</scope>
    <scope>BIOPHYSICOCHEMICAL PROPERTIES</scope>
    <scope>SUBCELLULAR LOCATION</scope>
    <scope>MUTAGENESIS OF HIS-139; MET-150; MET-154; 180-ALA--HIS-190; 184-ASP--HIS-190 AND 188-HIS--HIS-190</scope>
    <scope>DOMAIN</scope>
</reference>
<reference key="17">
    <citation type="journal article" date="2013" name="J. Proteome Res.">
        <title>Toward a comprehensive characterization of a human cancer cell phosphoproteome.</title>
        <authorList>
            <person name="Zhou H."/>
            <person name="Di Palma S."/>
            <person name="Preisinger C."/>
            <person name="Peng M."/>
            <person name="Polat A.N."/>
            <person name="Heck A.J."/>
            <person name="Mohammed S."/>
        </authorList>
    </citation>
    <scope>PHOSPHORYLATION [LARGE SCALE ANALYSIS] AT THR-114</scope>
    <scope>IDENTIFICATION BY MASS SPECTROMETRY [LARGE SCALE ANALYSIS]</scope>
    <source>
        <tissue>Erythroleukemia</tissue>
    </source>
</reference>
<reference key="18">
    <citation type="journal article" date="2013" name="Proc. Natl. Acad. Sci. U.S.A.">
        <title>Ctr2 regulates biogenesis of a cleaved form of mammalian Ctr1 metal transporter lacking the copper- and cisplatin-binding ecto-domain.</title>
        <authorList>
            <person name="Oehrvik H."/>
            <person name="Nose Y."/>
            <person name="Wood L.K."/>
            <person name="Kim B.E."/>
            <person name="Gleber S.C."/>
            <person name="Ralle M."/>
            <person name="Thiele D.J."/>
        </authorList>
    </citation>
    <scope>PROTEOLYTIC CLEAVAGE</scope>
    <scope>SITE</scope>
</reference>
<reference key="19">
    <citation type="journal article" date="2014" name="J. Phys. Chem. B">
        <title>Probing the structural flexibility of the human copper metallochaperone Atox1 dimer and its interaction with the CTR1 c-terminal domain.</title>
        <authorList>
            <person name="Levy A.R."/>
            <person name="Yarmiayev V."/>
            <person name="Moskovitz Y."/>
            <person name="Ruthstein S."/>
        </authorList>
    </citation>
    <scope>INTERACTION WITH ATOX1</scope>
    <scope>DOMAIN</scope>
</reference>
<reference key="20">
    <citation type="journal article" date="2015" name="Metallomics">
        <title>The copper transporter 1 (CTR1) is required to maintain the stability of copper transporter 2 (CTR2).</title>
        <authorList>
            <person name="Tsai C.Y."/>
            <person name="Liebig J.K."/>
            <person name="Tsigelny I.F."/>
            <person name="Howell S.B."/>
        </authorList>
    </citation>
    <scope>INTERACTION WITH SLC31A2</scope>
    <scope>SUBCELLULAR LOCATION</scope>
</reference>
<reference key="21">
    <citation type="journal article" date="2016" name="Biophys. J.">
        <title>The C-Terminus of Human Copper Importer Ctr1 Acts as a Binding Site and Transfers Copper to Atox1.</title>
        <authorList>
            <person name="Kahra D."/>
            <person name="Kovermann M."/>
            <person name="Wittung-Stafshede P."/>
        </authorList>
    </citation>
    <scope>FUNCTION</scope>
    <scope>DOMAIN</scope>
    <scope>MUTAGENESIS OF 188-HIS--HIS-190 AND CYS-189</scope>
    <scope>INTERACTION WITH ATOX1</scope>
</reference>
<reference key="22">
    <citation type="journal article" date="2016" name="J. Biol. Chem.">
        <title>Cathepsin Protease Controls Copper and Cisplatin Accumulation via Cleavage of the Ctr1 Metal-binding Ectodomain.</title>
        <authorList>
            <person name="Oehrvik H."/>
            <person name="Logeman B."/>
            <person name="Turk B."/>
            <person name="Reinheckel T."/>
            <person name="Thiele D.J."/>
        </authorList>
    </citation>
    <scope>PROTEOLYTIC CLEAVAGE</scope>
</reference>
<reference key="23">
    <citation type="journal article" date="2016" name="J. Cell Sci.">
        <title>Dynamic internalization and recycling of a metal ion transporter: Cu homeostasis and CTR1, the human Cu(+) uptake system.</title>
        <authorList>
            <person name="Clifford R.J."/>
            <person name="Maryon E.B."/>
            <person name="Kaplan J.H."/>
        </authorList>
    </citation>
    <scope>SUBCELLULAR LOCATION</scope>
</reference>
<reference key="24">
    <citation type="journal article" date="2018" name="J. Coord. Chem.">
        <title>Insights into the N-terminal Cu(II) and Cu(I) binding sites of the human copper transporter CTR1.</title>
        <authorList>
            <person name="Shenberger Y."/>
            <person name="Marciano O."/>
            <person name="Gottlieb H.E."/>
            <person name="Ruthstein S."/>
        </authorList>
    </citation>
    <scope>MUTAGENESIS OF HIS-3; HIS-5 AND HIS-6</scope>
    <scope>DOMAIN</scope>
    <scope>MOTIF</scope>
</reference>
<reference key="25">
    <citation type="journal article" date="2018" name="Metallomics">
        <title>The N-terminal 14-mer model peptide of human Ctr1 can collect Cu(ii) from albumin. Implications for copper uptake by Ctr1.</title>
        <authorList>
            <person name="Stefaniak E."/>
            <person name="Plonka D."/>
            <person name="Drew S.C."/>
            <person name="Bossak-Ahmad K."/>
            <person name="Haas K.L."/>
            <person name="Pushie M.J."/>
            <person name="Faller P."/>
            <person name="Wezynfeld N.E."/>
            <person name="Bal W."/>
        </authorList>
    </citation>
    <scope>FUNCTION</scope>
    <scope>MOTIF</scope>
    <scope>DOMAIN</scope>
</reference>
<reference key="26">
    <citation type="journal article" date="2019" name="BioMetals">
        <title>Copper-zinc superoxide dismutase (Sod1) activation terminates interaction between its copper chaperone (Ccs) and the cytosolic metal-binding domain of the copper importer Ctr1.</title>
        <authorList>
            <person name="Skopp A."/>
            <person name="Boyd S.D."/>
            <person name="Ullrich M.S."/>
            <person name="Liu L."/>
            <person name="Winkler D.D."/>
        </authorList>
    </citation>
    <scope>INTERACTION WITH CCS</scope>
    <scope>SUBUNIT</scope>
</reference>
<reference key="27">
    <citation type="journal article" date="2020" name="Chem. Commun. (Camb.)">
        <title>How trimerization of CTR1 N-terminal model peptides tunes Cu-binding and redox-chemistry.</title>
        <authorList>
            <person name="Galler T."/>
            <person name="Lebrun V."/>
            <person name="Raibaut L."/>
            <person name="Faller P."/>
            <person name="Wezynfeld N.E."/>
        </authorList>
    </citation>
    <scope>SUBUNIT</scope>
    <scope>DOMAIN</scope>
</reference>
<reference key="28">
    <citation type="journal article" date="2020" name="Toxicol. Rep.">
        <title>Promotion of cadmium uptake and cadmium-induced toxicity by the copper transporter CTR1 in HepG2 and ZFL cells.</title>
        <authorList>
            <person name="Kwok M.L."/>
            <person name="Li Z.P."/>
            <person name="Law T.Y.S."/>
            <person name="Chan K.M."/>
        </authorList>
    </citation>
    <scope>FUNCTION</scope>
</reference>
<reference key="29">
    <citation type="journal article" date="2022" name="Nat. Cell Biol.">
        <title>Cysteine oxidation of copper transporter CTR1 drives VEGFR2 signalling and angiogenesis.</title>
        <authorList>
            <person name="Das A."/>
            <person name="Ash D."/>
            <person name="Fouda A.Y."/>
            <person name="Sudhahar V."/>
            <person name="Kim Y.M."/>
            <person name="Hou Y."/>
            <person name="Hudson F.Z."/>
            <person name="Stansfield B.K."/>
            <person name="Caldwell R.B."/>
            <person name="McMenamin M."/>
            <person name="Littlejohn R."/>
            <person name="Su H."/>
            <person name="Regan M.R."/>
            <person name="Merrill B.J."/>
            <person name="Poole L.B."/>
            <person name="Kaplan J.H."/>
            <person name="Fukai T."/>
            <person name="Ushio-Fukai M."/>
        </authorList>
    </citation>
    <scope>FUNCTION</scope>
    <scope>OXIDATION AT CYS-189</scope>
    <scope>MUTAGENESIS OF MET-154 AND CYS-189</scope>
    <scope>INTERACTION WITH KDR</scope>
    <scope>DISULFIDE BOND</scope>
</reference>
<reference key="30">
    <citation type="journal article" date="2022" name="Front. Mol. Biosci.">
        <title>Multinuclear Metal-Binding Ability of the N-Terminal Region of Human Copper Transporter Ctr1: Dependence Upon pH and Metal Oxidation State.</title>
        <authorList>
            <person name="Nardella M.I."/>
            <person name="Fortino M."/>
            <person name="Barbanente A."/>
            <person name="Natile G."/>
            <person name="Pietropaolo A."/>
            <person name="Arnesano F."/>
        </authorList>
    </citation>
    <scope>DOMAIN</scope>
</reference>
<reference key="31">
    <citation type="journal article" date="2006" name="Proc. Natl. Acad. Sci. U.S.A.">
        <title>Projection structure of the human copper transporter CTR1 at 6-A resolution reveals a compact trimer with a novel channel-like architecture.</title>
        <authorList>
            <person name="Aller S.G."/>
            <person name="Unger V.M."/>
        </authorList>
    </citation>
    <scope>STRUCTURE BY ELECTRON MICROSCOPY (6 ANGSTROMS) IN A NATIVE PHOSPHOLIPID BILAYER</scope>
    <scope>SUBUNIT</scope>
</reference>
<reference evidence="34 35 36" key="32">
    <citation type="journal article" date="2012" name="J. Pept. Sci.">
        <title>Structural insights into the transmembrane domains of human copper transporter 1.</title>
        <authorList>
            <person name="Yang L."/>
            <person name="Huang Z."/>
            <person name="Li F."/>
        </authorList>
    </citation>
    <scope>STRUCTURE BY NMR OF 132-157</scope>
</reference>
<reference key="33">
    <citation type="journal article" date="2022" name="Hum. Mol. Genet.">
        <title>Newly identified disorder of copper metabolism caused by variants in CTR1, a high-affinity copper transporter.</title>
        <authorList>
            <person name="Batzios S."/>
            <person name="Tal G."/>
            <person name="DiStasio A.T."/>
            <person name="Peng Y."/>
            <person name="Charalambous C."/>
            <person name="Nicolaides P."/>
            <person name="Kamsteeg E.J."/>
            <person name="Korman S.H."/>
            <person name="Mandel H."/>
            <person name="Steinbach P.J."/>
            <person name="Yi L."/>
            <person name="Fair S.R."/>
            <person name="Hester M.E."/>
            <person name="Drousiotou A."/>
            <person name="Kaler S.G."/>
        </authorList>
    </citation>
    <scope>VARIANT NSCT HIS-95</scope>
    <scope>CHARACTERIZATION OF VARIANT NSCT HIS-95</scope>
    <scope>INVOLVEMENT IN NSCT</scope>
    <scope>SUBCELLULAR LOCATION</scope>
</reference>
<reference key="34">
    <citation type="journal article" date="2023" name="Clin. Genet.">
        <title>Fatal congenital copper transport defect caused by a homozygous likely pathogenic variant of SLC31A1.</title>
        <authorList>
            <person name="Dame C."/>
            <person name="Horn D."/>
            <person name="Schomburg L."/>
            <person name="Gruenhagen J."/>
            <person name="Chillon T.S."/>
            <person name="Tietze A."/>
            <person name="Vogt A."/>
            <person name="Buehrer C."/>
        </authorList>
    </citation>
    <scope>VARIANT NSCT PRO-79</scope>
    <scope>INVOLVEMENT IN NSCT</scope>
</reference>
<proteinExistence type="evidence at protein level"/>
<organism>
    <name type="scientific">Homo sapiens</name>
    <name type="common">Human</name>
    <dbReference type="NCBI Taxonomy" id="9606"/>
    <lineage>
        <taxon>Eukaryota</taxon>
        <taxon>Metazoa</taxon>
        <taxon>Chordata</taxon>
        <taxon>Craniata</taxon>
        <taxon>Vertebrata</taxon>
        <taxon>Euteleostomi</taxon>
        <taxon>Mammalia</taxon>
        <taxon>Eutheria</taxon>
        <taxon>Euarchontoglires</taxon>
        <taxon>Primates</taxon>
        <taxon>Haplorrhini</taxon>
        <taxon>Catarrhini</taxon>
        <taxon>Hominidae</taxon>
        <taxon>Homo</taxon>
    </lineage>
</organism>
<accession>O15431</accession>
<accession>A8K8Z6</accession>
<accession>Q53GR5</accession>
<accession>Q5T1M4</accession>